<reference key="1">
    <citation type="submission" date="2007-04" db="EMBL/GenBank/DDBJ databases">
        <title>Complete sequence of Roseiflexus sp. RS-1.</title>
        <authorList>
            <consortium name="US DOE Joint Genome Institute"/>
            <person name="Copeland A."/>
            <person name="Lucas S."/>
            <person name="Lapidus A."/>
            <person name="Barry K."/>
            <person name="Detter J.C."/>
            <person name="Glavina del Rio T."/>
            <person name="Hammon N."/>
            <person name="Israni S."/>
            <person name="Dalin E."/>
            <person name="Tice H."/>
            <person name="Pitluck S."/>
            <person name="Chertkov O."/>
            <person name="Brettin T."/>
            <person name="Bruce D."/>
            <person name="Han C."/>
            <person name="Schmutz J."/>
            <person name="Larimer F."/>
            <person name="Land M."/>
            <person name="Hauser L."/>
            <person name="Kyrpides N."/>
            <person name="Mikhailova N."/>
            <person name="Bryant D.A."/>
            <person name="Richardson P."/>
        </authorList>
    </citation>
    <scope>NUCLEOTIDE SEQUENCE [LARGE SCALE GENOMIC DNA]</scope>
    <source>
        <strain>RS-1</strain>
    </source>
</reference>
<accession>A5URV5</accession>
<gene>
    <name evidence="1" type="primary">pnp</name>
    <name type="ordered locus">RoseRS_0949</name>
</gene>
<keyword id="KW-0963">Cytoplasm</keyword>
<keyword id="KW-0460">Magnesium</keyword>
<keyword id="KW-0479">Metal-binding</keyword>
<keyword id="KW-0548">Nucleotidyltransferase</keyword>
<keyword id="KW-0694">RNA-binding</keyword>
<keyword id="KW-0808">Transferase</keyword>
<comment type="function">
    <text evidence="1">Involved in mRNA degradation. Catalyzes the phosphorolysis of single-stranded polyribonucleotides processively in the 3'- to 5'-direction.</text>
</comment>
<comment type="catalytic activity">
    <reaction evidence="1">
        <text>RNA(n+1) + phosphate = RNA(n) + a ribonucleoside 5'-diphosphate</text>
        <dbReference type="Rhea" id="RHEA:22096"/>
        <dbReference type="Rhea" id="RHEA-COMP:14527"/>
        <dbReference type="Rhea" id="RHEA-COMP:17342"/>
        <dbReference type="ChEBI" id="CHEBI:43474"/>
        <dbReference type="ChEBI" id="CHEBI:57930"/>
        <dbReference type="ChEBI" id="CHEBI:140395"/>
        <dbReference type="EC" id="2.7.7.8"/>
    </reaction>
</comment>
<comment type="cofactor">
    <cofactor evidence="1">
        <name>Mg(2+)</name>
        <dbReference type="ChEBI" id="CHEBI:18420"/>
    </cofactor>
</comment>
<comment type="subcellular location">
    <subcellularLocation>
        <location evidence="1">Cytoplasm</location>
    </subcellularLocation>
</comment>
<comment type="similarity">
    <text evidence="1">Belongs to the polyribonucleotide nucleotidyltransferase family.</text>
</comment>
<organism>
    <name type="scientific">Roseiflexus sp. (strain RS-1)</name>
    <dbReference type="NCBI Taxonomy" id="357808"/>
    <lineage>
        <taxon>Bacteria</taxon>
        <taxon>Bacillati</taxon>
        <taxon>Chloroflexota</taxon>
        <taxon>Chloroflexia</taxon>
        <taxon>Chloroflexales</taxon>
        <taxon>Roseiflexineae</taxon>
        <taxon>Roseiflexaceae</taxon>
        <taxon>Roseiflexus</taxon>
    </lineage>
</organism>
<sequence length="747" mass="80955">MSERQIHSVSMELAGRTLTLEAGRFAEQANGAVVVRYGDTMLLATAVASKEPRADADFFPLTVDYEEKMYAAGKIPGSFFKREGKPTDSAILTARLTDRPLRPLFPEGYRNEVQIIVTTFSIDMVNDPAPLAIIGASAALAISDIPFLGPVGAVQVGYIDGKVQINPEMPDMPNSDLDLVVAGTKDAVLMVEAGAKELPEDLMLEAIIQGHQVCKQICDLQNELVRLAGRPKREFVPPPVDTSLEEAIQQWLGNRLYEAITDPNKMVRDAQTEALKQEVIAHFTADEPEEELEARIAAVSTAFENLLYEEVRRMILERGERVDGRGPKDIRPISIEVGLIPRVHGSGLFTRGQTQVLTLATLGSPAEEQRLDDLGIETTKRYIHHYNFPPFSTGEVRRLGSPRRRDIGHGALAERSLLAVLPSKEEFPYTMRLVSETLSSNGSSSMASVCGSSLALMDAGVPIKAPVAGVAMGLITGKDGRWRVLTDIQGIEDHLGDMDFKVAGTAKGVTGLQLDIKTTGITYEIMREAFAQAREGRLYILDKMNAVISEPRKELSPYAPRIITLQINPEKIGALIGPGGKTVRGITEATGAQIDIEEDGRVYISTPDAAAAQQAVAMVEALTREIKVGDIFLGKVVRIMPFGAFVNLAPGKDGMVHVSELDVGRVENVEDVIKMGDEINVMVIGIEPGTGKVSLSRRALLTGETAEDRRAAGAGRGLRDGGGRSGGSDRGGDRGPRGDDRQRPRRR</sequence>
<name>PNP_ROSS1</name>
<protein>
    <recommendedName>
        <fullName evidence="1">Polyribonucleotide nucleotidyltransferase</fullName>
        <ecNumber evidence="1">2.7.7.8</ecNumber>
    </recommendedName>
    <alternativeName>
        <fullName evidence="1">Polynucleotide phosphorylase</fullName>
        <shortName evidence="1">PNPase</shortName>
    </alternativeName>
</protein>
<evidence type="ECO:0000255" key="1">
    <source>
        <dbReference type="HAMAP-Rule" id="MF_01595"/>
    </source>
</evidence>
<evidence type="ECO:0000256" key="2">
    <source>
        <dbReference type="SAM" id="MobiDB-lite"/>
    </source>
</evidence>
<proteinExistence type="inferred from homology"/>
<dbReference type="EC" id="2.7.7.8" evidence="1"/>
<dbReference type="EMBL" id="CP000686">
    <property type="protein sequence ID" value="ABQ89358.1"/>
    <property type="molecule type" value="Genomic_DNA"/>
</dbReference>
<dbReference type="RefSeq" id="WP_011955711.1">
    <property type="nucleotide sequence ID" value="NC_009523.1"/>
</dbReference>
<dbReference type="SMR" id="A5URV5"/>
<dbReference type="STRING" id="357808.RoseRS_0949"/>
<dbReference type="KEGG" id="rrs:RoseRS_0949"/>
<dbReference type="eggNOG" id="COG1185">
    <property type="taxonomic scope" value="Bacteria"/>
</dbReference>
<dbReference type="HOGENOM" id="CLU_004217_2_2_0"/>
<dbReference type="OrthoDB" id="9804305at2"/>
<dbReference type="Proteomes" id="UP000006554">
    <property type="component" value="Chromosome"/>
</dbReference>
<dbReference type="GO" id="GO:0005829">
    <property type="term" value="C:cytosol"/>
    <property type="evidence" value="ECO:0007669"/>
    <property type="project" value="TreeGrafter"/>
</dbReference>
<dbReference type="GO" id="GO:0000175">
    <property type="term" value="F:3'-5'-RNA exonuclease activity"/>
    <property type="evidence" value="ECO:0007669"/>
    <property type="project" value="TreeGrafter"/>
</dbReference>
<dbReference type="GO" id="GO:0000287">
    <property type="term" value="F:magnesium ion binding"/>
    <property type="evidence" value="ECO:0007669"/>
    <property type="project" value="UniProtKB-UniRule"/>
</dbReference>
<dbReference type="GO" id="GO:0004654">
    <property type="term" value="F:polyribonucleotide nucleotidyltransferase activity"/>
    <property type="evidence" value="ECO:0007669"/>
    <property type="project" value="UniProtKB-UniRule"/>
</dbReference>
<dbReference type="GO" id="GO:0003723">
    <property type="term" value="F:RNA binding"/>
    <property type="evidence" value="ECO:0007669"/>
    <property type="project" value="UniProtKB-UniRule"/>
</dbReference>
<dbReference type="GO" id="GO:0006402">
    <property type="term" value="P:mRNA catabolic process"/>
    <property type="evidence" value="ECO:0007669"/>
    <property type="project" value="UniProtKB-UniRule"/>
</dbReference>
<dbReference type="GO" id="GO:0006396">
    <property type="term" value="P:RNA processing"/>
    <property type="evidence" value="ECO:0007669"/>
    <property type="project" value="InterPro"/>
</dbReference>
<dbReference type="CDD" id="cd02393">
    <property type="entry name" value="KH-I_PNPase"/>
    <property type="match status" value="1"/>
</dbReference>
<dbReference type="CDD" id="cd11363">
    <property type="entry name" value="RNase_PH_PNPase_1"/>
    <property type="match status" value="1"/>
</dbReference>
<dbReference type="CDD" id="cd11364">
    <property type="entry name" value="RNase_PH_PNPase_2"/>
    <property type="match status" value="1"/>
</dbReference>
<dbReference type="CDD" id="cd04472">
    <property type="entry name" value="S1_PNPase"/>
    <property type="match status" value="1"/>
</dbReference>
<dbReference type="FunFam" id="3.30.1370.10:FF:000001">
    <property type="entry name" value="Polyribonucleotide nucleotidyltransferase"/>
    <property type="match status" value="1"/>
</dbReference>
<dbReference type="FunFam" id="3.30.230.70:FF:000001">
    <property type="entry name" value="Polyribonucleotide nucleotidyltransferase"/>
    <property type="match status" value="1"/>
</dbReference>
<dbReference type="FunFam" id="3.30.230.70:FF:000002">
    <property type="entry name" value="Polyribonucleotide nucleotidyltransferase"/>
    <property type="match status" value="1"/>
</dbReference>
<dbReference type="Gene3D" id="3.30.230.70">
    <property type="entry name" value="GHMP Kinase, N-terminal domain"/>
    <property type="match status" value="2"/>
</dbReference>
<dbReference type="Gene3D" id="3.30.1370.10">
    <property type="entry name" value="K Homology domain, type 1"/>
    <property type="match status" value="1"/>
</dbReference>
<dbReference type="Gene3D" id="2.40.50.140">
    <property type="entry name" value="Nucleic acid-binding proteins"/>
    <property type="match status" value="1"/>
</dbReference>
<dbReference type="HAMAP" id="MF_01595">
    <property type="entry name" value="PNPase"/>
    <property type="match status" value="1"/>
</dbReference>
<dbReference type="InterPro" id="IPR001247">
    <property type="entry name" value="ExoRNase_PH_dom1"/>
</dbReference>
<dbReference type="InterPro" id="IPR015847">
    <property type="entry name" value="ExoRNase_PH_dom2"/>
</dbReference>
<dbReference type="InterPro" id="IPR036345">
    <property type="entry name" value="ExoRNase_PH_dom2_sf"/>
</dbReference>
<dbReference type="InterPro" id="IPR004087">
    <property type="entry name" value="KH_dom"/>
</dbReference>
<dbReference type="InterPro" id="IPR004088">
    <property type="entry name" value="KH_dom_type_1"/>
</dbReference>
<dbReference type="InterPro" id="IPR036612">
    <property type="entry name" value="KH_dom_type_1_sf"/>
</dbReference>
<dbReference type="InterPro" id="IPR012340">
    <property type="entry name" value="NA-bd_OB-fold"/>
</dbReference>
<dbReference type="InterPro" id="IPR012162">
    <property type="entry name" value="PNPase"/>
</dbReference>
<dbReference type="InterPro" id="IPR027408">
    <property type="entry name" value="PNPase/RNase_PH_dom_sf"/>
</dbReference>
<dbReference type="InterPro" id="IPR015848">
    <property type="entry name" value="PNPase_PH_RNA-bd_bac/org-type"/>
</dbReference>
<dbReference type="InterPro" id="IPR036456">
    <property type="entry name" value="PNPase_PH_RNA-bd_sf"/>
</dbReference>
<dbReference type="InterPro" id="IPR020568">
    <property type="entry name" value="Ribosomal_Su5_D2-typ_SF"/>
</dbReference>
<dbReference type="InterPro" id="IPR003029">
    <property type="entry name" value="S1_domain"/>
</dbReference>
<dbReference type="NCBIfam" id="TIGR03591">
    <property type="entry name" value="polynuc_phos"/>
    <property type="match status" value="1"/>
</dbReference>
<dbReference type="NCBIfam" id="NF008805">
    <property type="entry name" value="PRK11824.1"/>
    <property type="match status" value="1"/>
</dbReference>
<dbReference type="PANTHER" id="PTHR11252">
    <property type="entry name" value="POLYRIBONUCLEOTIDE NUCLEOTIDYLTRANSFERASE"/>
    <property type="match status" value="1"/>
</dbReference>
<dbReference type="PANTHER" id="PTHR11252:SF0">
    <property type="entry name" value="POLYRIBONUCLEOTIDE NUCLEOTIDYLTRANSFERASE 1, MITOCHONDRIAL"/>
    <property type="match status" value="1"/>
</dbReference>
<dbReference type="Pfam" id="PF00013">
    <property type="entry name" value="KH_1"/>
    <property type="match status" value="1"/>
</dbReference>
<dbReference type="Pfam" id="PF03726">
    <property type="entry name" value="PNPase"/>
    <property type="match status" value="1"/>
</dbReference>
<dbReference type="Pfam" id="PF01138">
    <property type="entry name" value="RNase_PH"/>
    <property type="match status" value="2"/>
</dbReference>
<dbReference type="Pfam" id="PF03725">
    <property type="entry name" value="RNase_PH_C"/>
    <property type="match status" value="2"/>
</dbReference>
<dbReference type="Pfam" id="PF00575">
    <property type="entry name" value="S1"/>
    <property type="match status" value="1"/>
</dbReference>
<dbReference type="PIRSF" id="PIRSF005499">
    <property type="entry name" value="PNPase"/>
    <property type="match status" value="1"/>
</dbReference>
<dbReference type="SMART" id="SM00322">
    <property type="entry name" value="KH"/>
    <property type="match status" value="1"/>
</dbReference>
<dbReference type="SMART" id="SM00316">
    <property type="entry name" value="S1"/>
    <property type="match status" value="1"/>
</dbReference>
<dbReference type="SUPFAM" id="SSF54791">
    <property type="entry name" value="Eukaryotic type KH-domain (KH-domain type I)"/>
    <property type="match status" value="1"/>
</dbReference>
<dbReference type="SUPFAM" id="SSF50249">
    <property type="entry name" value="Nucleic acid-binding proteins"/>
    <property type="match status" value="1"/>
</dbReference>
<dbReference type="SUPFAM" id="SSF46915">
    <property type="entry name" value="Polynucleotide phosphorylase/guanosine pentaphosphate synthase (PNPase/GPSI), domain 3"/>
    <property type="match status" value="1"/>
</dbReference>
<dbReference type="SUPFAM" id="SSF55666">
    <property type="entry name" value="Ribonuclease PH domain 2-like"/>
    <property type="match status" value="2"/>
</dbReference>
<dbReference type="SUPFAM" id="SSF54211">
    <property type="entry name" value="Ribosomal protein S5 domain 2-like"/>
    <property type="match status" value="2"/>
</dbReference>
<dbReference type="PROSITE" id="PS50084">
    <property type="entry name" value="KH_TYPE_1"/>
    <property type="match status" value="1"/>
</dbReference>
<dbReference type="PROSITE" id="PS50126">
    <property type="entry name" value="S1"/>
    <property type="match status" value="1"/>
</dbReference>
<feature type="chain" id="PRO_0000329820" description="Polyribonucleotide nucleotidyltransferase">
    <location>
        <begin position="1"/>
        <end position="747"/>
    </location>
</feature>
<feature type="domain" description="KH" evidence="1">
    <location>
        <begin position="560"/>
        <end position="619"/>
    </location>
</feature>
<feature type="domain" description="S1 motif" evidence="1">
    <location>
        <begin position="629"/>
        <end position="698"/>
    </location>
</feature>
<feature type="region of interest" description="Disordered" evidence="2">
    <location>
        <begin position="705"/>
        <end position="747"/>
    </location>
</feature>
<feature type="compositionally biased region" description="Basic and acidic residues" evidence="2">
    <location>
        <begin position="706"/>
        <end position="722"/>
    </location>
</feature>
<feature type="compositionally biased region" description="Basic and acidic residues" evidence="2">
    <location>
        <begin position="730"/>
        <end position="747"/>
    </location>
</feature>
<feature type="binding site" evidence="1">
    <location>
        <position position="493"/>
    </location>
    <ligand>
        <name>Mg(2+)</name>
        <dbReference type="ChEBI" id="CHEBI:18420"/>
    </ligand>
</feature>
<feature type="binding site" evidence="1">
    <location>
        <position position="499"/>
    </location>
    <ligand>
        <name>Mg(2+)</name>
        <dbReference type="ChEBI" id="CHEBI:18420"/>
    </ligand>
</feature>